<sequence>MFRVLNDDVYSPAEIQQQNPLAFGKASSLFTDNRSANDQCETGENVRESGQDHVKRPMNAFIVWSRERRRKVALENPKMQNSEISKQLGYEWKRLTDAEKRPFFEEAQRLLAVHRDKYPGYKYRPRRKRKRQQKLLPADSSKLCKQMHIETLQPFTYRDGCANTTGSRMESQLSLSQSVTITNSFFQNEHHSSWTNLGHNRVTLATQISADFPFYQSLQPELSCAYFQY</sequence>
<organism>
    <name type="scientific">Przewalskium albirostris</name>
    <name type="common">Thorold's deer</name>
    <name type="synonym">Cervus albirostris</name>
    <dbReference type="NCBI Taxonomy" id="1088058"/>
    <lineage>
        <taxon>Eukaryota</taxon>
        <taxon>Metazoa</taxon>
        <taxon>Chordata</taxon>
        <taxon>Craniata</taxon>
        <taxon>Vertebrata</taxon>
        <taxon>Euteleostomi</taxon>
        <taxon>Mammalia</taxon>
        <taxon>Eutheria</taxon>
        <taxon>Laurasiatheria</taxon>
        <taxon>Artiodactyla</taxon>
        <taxon>Ruminantia</taxon>
        <taxon>Pecora</taxon>
        <taxon>Cervidae</taxon>
        <taxon>Cervinae</taxon>
        <taxon>Cervus</taxon>
    </lineage>
</organism>
<gene>
    <name type="primary">SRY</name>
    <name type="synonym">TDF</name>
</gene>
<comment type="function">
    <text evidence="1 2">Transcriptional regulator that controls a genetic switch in male development. It is necessary and sufficient for initiating male sex determination by directing the development of supporting cell precursors (pre-Sertoli cells) as Sertoli rather than granulosa cells. Involved in different aspects of gene regulation including promoter activation or repression. Binds to the DNA consensus sequence 5'-[AT]AACAA[AT]-3'. SRY HMG box recognizes DNA by partial intercalation in the minor groove and promotes DNA bending. Also involved in pre-mRNA splicing (By similarity). In male adult brain involved in the maintenance of motor functions of dopaminergic neurons (By similarity).</text>
</comment>
<comment type="subunit">
    <text evidence="2">Interacts with CALM, EP300, HDAC3, KPNB1, ZNF208 isoform KRAB-O, PARP1, SLC9A3R2 and WT1. The interaction with EP300 modulates its DNA-binding activity. The interaction with KPNB1 is sensitive to dissociation by Ran in the GTP-bound form. Interaction with PARP1 impaired its DNA-binding activity.</text>
</comment>
<comment type="subcellular location">
    <subcellularLocation>
        <location evidence="2">Nucleus speckle</location>
    </subcellularLocation>
    <subcellularLocation>
        <location evidence="2">Cytoplasm</location>
    </subcellularLocation>
    <subcellularLocation>
        <location evidence="2">Nucleus</location>
    </subcellularLocation>
</comment>
<comment type="similarity">
    <text evidence="4">Belongs to the SRY family.</text>
</comment>
<comment type="online information" name="Protein Spotlight">
    <link uri="https://www.proteinspotlight.org/back_issues/080"/>
    <text>The tenuous nature of sex - Issue 80 of March 2007</text>
</comment>
<protein>
    <recommendedName>
        <fullName>Sex-determining region Y protein</fullName>
    </recommendedName>
    <alternativeName>
        <fullName>Testis-determining factor</fullName>
    </alternativeName>
</protein>
<reference key="1">
    <citation type="submission" date="2003-02" db="EMBL/GenBank/DDBJ databases">
        <title>SRY DNA phylogeny of red deer.</title>
        <authorList>
            <person name="Ludt C.J."/>
            <person name="Kuehn R."/>
            <person name="Schroeder W."/>
            <person name="Rottmann O."/>
        </authorList>
    </citation>
    <scope>NUCLEOTIDE SEQUENCE [GENOMIC DNA]</scope>
    <source>
        <tissue>Corpus spongiosum</tissue>
    </source>
</reference>
<proteinExistence type="inferred from homology"/>
<accession>Q863C0</accession>
<feature type="chain" id="PRO_0000048654" description="Sex-determining region Y protein">
    <location>
        <begin position="1"/>
        <end position="229"/>
    </location>
</feature>
<feature type="DNA-binding region" description="HMG box" evidence="3">
    <location>
        <begin position="54"/>
        <end position="122"/>
    </location>
</feature>
<keyword id="KW-0010">Activator</keyword>
<keyword id="KW-0112">Calmodulin-binding</keyword>
<keyword id="KW-0963">Cytoplasm</keyword>
<keyword id="KW-0221">Differentiation</keyword>
<keyword id="KW-0238">DNA-binding</keyword>
<keyword id="KW-0539">Nucleus</keyword>
<keyword id="KW-0678">Repressor</keyword>
<keyword id="KW-0726">Sexual differentiation</keyword>
<keyword id="KW-0804">Transcription</keyword>
<keyword id="KW-0805">Transcription regulation</keyword>
<dbReference type="EMBL" id="AY244498">
    <property type="protein sequence ID" value="AAO92434.1"/>
    <property type="molecule type" value="Genomic_DNA"/>
</dbReference>
<dbReference type="SMR" id="Q863C0"/>
<dbReference type="GO" id="GO:0005737">
    <property type="term" value="C:cytoplasm"/>
    <property type="evidence" value="ECO:0007669"/>
    <property type="project" value="UniProtKB-SubCell"/>
</dbReference>
<dbReference type="GO" id="GO:0016607">
    <property type="term" value="C:nuclear speck"/>
    <property type="evidence" value="ECO:0007669"/>
    <property type="project" value="UniProtKB-SubCell"/>
</dbReference>
<dbReference type="GO" id="GO:0005634">
    <property type="term" value="C:nucleus"/>
    <property type="evidence" value="ECO:0000250"/>
    <property type="project" value="UniProtKB"/>
</dbReference>
<dbReference type="GO" id="GO:0005516">
    <property type="term" value="F:calmodulin binding"/>
    <property type="evidence" value="ECO:0007669"/>
    <property type="project" value="UniProtKB-KW"/>
</dbReference>
<dbReference type="GO" id="GO:0001228">
    <property type="term" value="F:DNA-binding transcription activator activity, RNA polymerase II-specific"/>
    <property type="evidence" value="ECO:0007669"/>
    <property type="project" value="TreeGrafter"/>
</dbReference>
<dbReference type="GO" id="GO:0000978">
    <property type="term" value="F:RNA polymerase II cis-regulatory region sequence-specific DNA binding"/>
    <property type="evidence" value="ECO:0007669"/>
    <property type="project" value="TreeGrafter"/>
</dbReference>
<dbReference type="GO" id="GO:0030154">
    <property type="term" value="P:cell differentiation"/>
    <property type="evidence" value="ECO:0007669"/>
    <property type="project" value="UniProtKB-KW"/>
</dbReference>
<dbReference type="GO" id="GO:0030238">
    <property type="term" value="P:male sex determination"/>
    <property type="evidence" value="ECO:0007669"/>
    <property type="project" value="InterPro"/>
</dbReference>
<dbReference type="GO" id="GO:0007548">
    <property type="term" value="P:sex differentiation"/>
    <property type="evidence" value="ECO:0007669"/>
    <property type="project" value="UniProtKB-KW"/>
</dbReference>
<dbReference type="CDD" id="cd22034">
    <property type="entry name" value="HMG-box_SoxA_SRY"/>
    <property type="match status" value="1"/>
</dbReference>
<dbReference type="FunFam" id="1.10.30.10:FF:000002">
    <property type="entry name" value="transcription factor Sox-2"/>
    <property type="match status" value="1"/>
</dbReference>
<dbReference type="Gene3D" id="1.10.30.10">
    <property type="entry name" value="High mobility group box domain"/>
    <property type="match status" value="1"/>
</dbReference>
<dbReference type="InterPro" id="IPR009071">
    <property type="entry name" value="HMG_box_dom"/>
</dbReference>
<dbReference type="InterPro" id="IPR036910">
    <property type="entry name" value="HMG_box_dom_sf"/>
</dbReference>
<dbReference type="InterPro" id="IPR017253">
    <property type="entry name" value="SRY"/>
</dbReference>
<dbReference type="InterPro" id="IPR050140">
    <property type="entry name" value="SRY-related_HMG-box_TF-like"/>
</dbReference>
<dbReference type="PANTHER" id="PTHR10270:SF161">
    <property type="entry name" value="SEX-DETERMINING REGION Y PROTEIN"/>
    <property type="match status" value="1"/>
</dbReference>
<dbReference type="PANTHER" id="PTHR10270">
    <property type="entry name" value="SOX TRANSCRIPTION FACTOR"/>
    <property type="match status" value="1"/>
</dbReference>
<dbReference type="Pfam" id="PF00505">
    <property type="entry name" value="HMG_box"/>
    <property type="match status" value="1"/>
</dbReference>
<dbReference type="PIRSF" id="PIRSF037653">
    <property type="entry name" value="SRY"/>
    <property type="match status" value="1"/>
</dbReference>
<dbReference type="SMART" id="SM00398">
    <property type="entry name" value="HMG"/>
    <property type="match status" value="1"/>
</dbReference>
<dbReference type="SUPFAM" id="SSF47095">
    <property type="entry name" value="HMG-box"/>
    <property type="match status" value="1"/>
</dbReference>
<dbReference type="PROSITE" id="PS50118">
    <property type="entry name" value="HMG_BOX_2"/>
    <property type="match status" value="1"/>
</dbReference>
<name>SRY_PRZAL</name>
<evidence type="ECO:0000250" key="1">
    <source>
        <dbReference type="UniProtKB" id="P36394"/>
    </source>
</evidence>
<evidence type="ECO:0000250" key="2">
    <source>
        <dbReference type="UniProtKB" id="Q05066"/>
    </source>
</evidence>
<evidence type="ECO:0000255" key="3">
    <source>
        <dbReference type="PROSITE-ProRule" id="PRU00267"/>
    </source>
</evidence>
<evidence type="ECO:0000305" key="4"/>